<protein>
    <recommendedName>
        <fullName evidence="1">Glycerol-3-phosphate acyltransferase</fullName>
    </recommendedName>
    <alternativeName>
        <fullName evidence="1">Acyl-PO4 G3P acyltransferase</fullName>
    </alternativeName>
    <alternativeName>
        <fullName evidence="1">Acyl-phosphate--glycerol-3-phosphate acyltransferase</fullName>
    </alternativeName>
    <alternativeName>
        <fullName evidence="1">G3P acyltransferase</fullName>
        <shortName evidence="1">GPAT</shortName>
        <ecNumber evidence="1">2.3.1.275</ecNumber>
    </alternativeName>
    <alternativeName>
        <fullName evidence="1">Lysophosphatidic acid synthase</fullName>
        <shortName evidence="1">LPA synthase</shortName>
    </alternativeName>
</protein>
<keyword id="KW-0997">Cell inner membrane</keyword>
<keyword id="KW-1003">Cell membrane</keyword>
<keyword id="KW-0444">Lipid biosynthesis</keyword>
<keyword id="KW-0443">Lipid metabolism</keyword>
<keyword id="KW-0472">Membrane</keyword>
<keyword id="KW-0594">Phospholipid biosynthesis</keyword>
<keyword id="KW-1208">Phospholipid metabolism</keyword>
<keyword id="KW-0808">Transferase</keyword>
<keyword id="KW-0812">Transmembrane</keyword>
<keyword id="KW-1133">Transmembrane helix</keyword>
<accession>A5IEF8</accession>
<name>PLSY_LEGPC</name>
<reference key="1">
    <citation type="submission" date="2006-11" db="EMBL/GenBank/DDBJ databases">
        <title>Identification and characterization of a new conjugation/ type IVA secretion system (trb/tra) of L. pneumophila Corby localized on a mobile genomic island.</title>
        <authorList>
            <person name="Gloeckner G."/>
            <person name="Albert-Weissenberger C."/>
            <person name="Weinmann E."/>
            <person name="Jacobi S."/>
            <person name="Schunder E."/>
            <person name="Steinert M."/>
            <person name="Buchrieser C."/>
            <person name="Hacker J."/>
            <person name="Heuner K."/>
        </authorList>
    </citation>
    <scope>NUCLEOTIDE SEQUENCE [LARGE SCALE GENOMIC DNA]</scope>
    <source>
        <strain>Corby</strain>
    </source>
</reference>
<proteinExistence type="inferred from homology"/>
<organism>
    <name type="scientific">Legionella pneumophila (strain Corby)</name>
    <dbReference type="NCBI Taxonomy" id="400673"/>
    <lineage>
        <taxon>Bacteria</taxon>
        <taxon>Pseudomonadati</taxon>
        <taxon>Pseudomonadota</taxon>
        <taxon>Gammaproteobacteria</taxon>
        <taxon>Legionellales</taxon>
        <taxon>Legionellaceae</taxon>
        <taxon>Legionella</taxon>
    </lineage>
</organism>
<feature type="chain" id="PRO_1000064192" description="Glycerol-3-phosphate acyltransferase">
    <location>
        <begin position="1"/>
        <end position="277"/>
    </location>
</feature>
<feature type="transmembrane region" description="Helical" evidence="1">
    <location>
        <begin position="3"/>
        <end position="23"/>
    </location>
</feature>
<feature type="transmembrane region" description="Helical" evidence="1">
    <location>
        <begin position="55"/>
        <end position="75"/>
    </location>
</feature>
<feature type="transmembrane region" description="Helical" evidence="1">
    <location>
        <begin position="79"/>
        <end position="99"/>
    </location>
</feature>
<feature type="transmembrane region" description="Helical" evidence="1">
    <location>
        <begin position="111"/>
        <end position="131"/>
    </location>
</feature>
<feature type="transmembrane region" description="Helical" evidence="1">
    <location>
        <begin position="155"/>
        <end position="175"/>
    </location>
</feature>
<feature type="region of interest" description="Disordered" evidence="2">
    <location>
        <begin position="207"/>
        <end position="277"/>
    </location>
</feature>
<feature type="compositionally biased region" description="Basic and acidic residues" evidence="2">
    <location>
        <begin position="216"/>
        <end position="239"/>
    </location>
</feature>
<feature type="compositionally biased region" description="Basic residues" evidence="2">
    <location>
        <begin position="240"/>
        <end position="253"/>
    </location>
</feature>
<feature type="compositionally biased region" description="Basic residues" evidence="2">
    <location>
        <begin position="262"/>
        <end position="271"/>
    </location>
</feature>
<comment type="function">
    <text evidence="1">Catalyzes the transfer of an acyl group from acyl-phosphate (acyl-PO(4)) to glycerol-3-phosphate (G3P) to form lysophosphatidic acid (LPA). This enzyme utilizes acyl-phosphate as fatty acyl donor, but not acyl-CoA or acyl-ACP.</text>
</comment>
<comment type="catalytic activity">
    <reaction evidence="1">
        <text>an acyl phosphate + sn-glycerol 3-phosphate = a 1-acyl-sn-glycero-3-phosphate + phosphate</text>
        <dbReference type="Rhea" id="RHEA:34075"/>
        <dbReference type="ChEBI" id="CHEBI:43474"/>
        <dbReference type="ChEBI" id="CHEBI:57597"/>
        <dbReference type="ChEBI" id="CHEBI:57970"/>
        <dbReference type="ChEBI" id="CHEBI:59918"/>
        <dbReference type="EC" id="2.3.1.275"/>
    </reaction>
</comment>
<comment type="pathway">
    <text evidence="1">Lipid metabolism; phospholipid metabolism.</text>
</comment>
<comment type="subunit">
    <text evidence="1">Probably interacts with PlsX.</text>
</comment>
<comment type="subcellular location">
    <subcellularLocation>
        <location evidence="1">Cell inner membrane</location>
        <topology evidence="1">Multi-pass membrane protein</topology>
    </subcellularLocation>
</comment>
<comment type="similarity">
    <text evidence="1">Belongs to the PlsY family.</text>
</comment>
<dbReference type="EC" id="2.3.1.275" evidence="1"/>
<dbReference type="EMBL" id="CP000675">
    <property type="protein sequence ID" value="ABQ55758.1"/>
    <property type="molecule type" value="Genomic_DNA"/>
</dbReference>
<dbReference type="RefSeq" id="WP_011947200.1">
    <property type="nucleotide sequence ID" value="NC_009494.2"/>
</dbReference>
<dbReference type="SMR" id="A5IEF8"/>
<dbReference type="KEGG" id="lpc:LPC_1825"/>
<dbReference type="HOGENOM" id="CLU_081254_0_1_6"/>
<dbReference type="UniPathway" id="UPA00085"/>
<dbReference type="GO" id="GO:0005886">
    <property type="term" value="C:plasma membrane"/>
    <property type="evidence" value="ECO:0007669"/>
    <property type="project" value="UniProtKB-SubCell"/>
</dbReference>
<dbReference type="GO" id="GO:0043772">
    <property type="term" value="F:acyl-phosphate glycerol-3-phosphate acyltransferase activity"/>
    <property type="evidence" value="ECO:0007669"/>
    <property type="project" value="UniProtKB-UniRule"/>
</dbReference>
<dbReference type="GO" id="GO:0008654">
    <property type="term" value="P:phospholipid biosynthetic process"/>
    <property type="evidence" value="ECO:0007669"/>
    <property type="project" value="UniProtKB-UniRule"/>
</dbReference>
<dbReference type="HAMAP" id="MF_01043">
    <property type="entry name" value="PlsY"/>
    <property type="match status" value="1"/>
</dbReference>
<dbReference type="InterPro" id="IPR003811">
    <property type="entry name" value="G3P_acylTferase_PlsY"/>
</dbReference>
<dbReference type="NCBIfam" id="TIGR00023">
    <property type="entry name" value="glycerol-3-phosphate 1-O-acyltransferase PlsY"/>
    <property type="match status" value="1"/>
</dbReference>
<dbReference type="PANTHER" id="PTHR30309:SF0">
    <property type="entry name" value="GLYCEROL-3-PHOSPHATE ACYLTRANSFERASE-RELATED"/>
    <property type="match status" value="1"/>
</dbReference>
<dbReference type="PANTHER" id="PTHR30309">
    <property type="entry name" value="INNER MEMBRANE PROTEIN YGIH"/>
    <property type="match status" value="1"/>
</dbReference>
<dbReference type="Pfam" id="PF02660">
    <property type="entry name" value="G3P_acyltransf"/>
    <property type="match status" value="1"/>
</dbReference>
<dbReference type="SMART" id="SM01207">
    <property type="entry name" value="G3P_acyltransf"/>
    <property type="match status" value="1"/>
</dbReference>
<gene>
    <name evidence="1" type="primary">plsY</name>
    <name type="ordered locus">LPC_1825</name>
</gene>
<sequence>MALFIFLILVGYLMGSINSAIIVCRTFGLPDPREEGSKNPGATNVLRLGGKQYGIMVMVFDALKGILPVILAKLLSAEPVTVAFTALAAVVGHMYPVFFHFRGGKGVATTIGALLAFHFVIGVMVAATWLLVANFWRYSSLASIASISLAPFYSLILVGNLNIFPPLFMITILVLYKHRDNFNRLIDGKEPKIKFKHSVIEEIMEASPATSAEQEFPGKEVIDTNIDETEKTEQAEAVKKPKVKKATTKAKKTTSKEETTKKPKSTKPKTKTVKEKE</sequence>
<evidence type="ECO:0000255" key="1">
    <source>
        <dbReference type="HAMAP-Rule" id="MF_01043"/>
    </source>
</evidence>
<evidence type="ECO:0000256" key="2">
    <source>
        <dbReference type="SAM" id="MobiDB-lite"/>
    </source>
</evidence>